<proteinExistence type="evidence at protein level"/>
<reference key="1">
    <citation type="journal article" date="1999" name="Biochim. Biophys. Acta">
        <title>Structure and expression of a novel human FGF, FGF-19, expressed in the fetal brain.</title>
        <authorList>
            <person name="Nishimura T."/>
            <person name="Utsunomiya Y."/>
            <person name="Hoshikawa M."/>
            <person name="Ohuchi H."/>
            <person name="Itoh N."/>
        </authorList>
    </citation>
    <scope>NUCLEOTIDE SEQUENCE [MRNA]</scope>
    <source>
        <tissue>Brain</tissue>
    </source>
</reference>
<reference key="2">
    <citation type="journal article" date="1999" name="Cytokine">
        <title>FGF-19, a novel fibroblast growth factor with unique specificity for FGFR4.</title>
        <authorList>
            <person name="Xie M.-H."/>
            <person name="Holcomb I."/>
            <person name="Deuel B."/>
            <person name="Dowd P."/>
            <person name="Huang A."/>
            <person name="Vagts A."/>
            <person name="Foster J."/>
            <person name="Liang J."/>
            <person name="Brush J."/>
            <person name="Gu Q."/>
            <person name="Hillan K."/>
            <person name="Goddard A."/>
            <person name="Gurney A.L."/>
        </authorList>
    </citation>
    <scope>NUCLEOTIDE SEQUENCE [MRNA]</scope>
    <scope>TISSUE SPECIFICITY</scope>
    <scope>INTERACTION WITH FGFR4</scope>
    <scope>RECEPTOR SPECIFICITY</scope>
</reference>
<reference key="3">
    <citation type="journal article" date="2003" name="Genome Res.">
        <title>The secreted protein discovery initiative (SPDI), a large-scale effort to identify novel human secreted and transmembrane proteins: a bioinformatics assessment.</title>
        <authorList>
            <person name="Clark H.F."/>
            <person name="Gurney A.L."/>
            <person name="Abaya E."/>
            <person name="Baker K."/>
            <person name="Baldwin D.T."/>
            <person name="Brush J."/>
            <person name="Chen J."/>
            <person name="Chow B."/>
            <person name="Chui C."/>
            <person name="Crowley C."/>
            <person name="Currell B."/>
            <person name="Deuel B."/>
            <person name="Dowd P."/>
            <person name="Eaton D."/>
            <person name="Foster J.S."/>
            <person name="Grimaldi C."/>
            <person name="Gu Q."/>
            <person name="Hass P.E."/>
            <person name="Heldens S."/>
            <person name="Huang A."/>
            <person name="Kim H.S."/>
            <person name="Klimowski L."/>
            <person name="Jin Y."/>
            <person name="Johnson S."/>
            <person name="Lee J."/>
            <person name="Lewis L."/>
            <person name="Liao D."/>
            <person name="Mark M.R."/>
            <person name="Robbie E."/>
            <person name="Sanchez C."/>
            <person name="Schoenfeld J."/>
            <person name="Seshagiri S."/>
            <person name="Simmons L."/>
            <person name="Singh J."/>
            <person name="Smith V."/>
            <person name="Stinson J."/>
            <person name="Vagts A."/>
            <person name="Vandlen R.L."/>
            <person name="Watanabe C."/>
            <person name="Wieand D."/>
            <person name="Woods K."/>
            <person name="Xie M.-H."/>
            <person name="Yansura D.G."/>
            <person name="Yi S."/>
            <person name="Yu G."/>
            <person name="Yuan J."/>
            <person name="Zhang M."/>
            <person name="Zhang Z."/>
            <person name="Goddard A.D."/>
            <person name="Wood W.I."/>
            <person name="Godowski P.J."/>
            <person name="Gray A.M."/>
        </authorList>
    </citation>
    <scope>NUCLEOTIDE SEQUENCE [LARGE SCALE MRNA]</scope>
</reference>
<reference key="4">
    <citation type="submission" date="2003-05" db="EMBL/GenBank/DDBJ databases">
        <title>Cloning of human full-length CDSs in BD Creator(TM) system donor vector.</title>
        <authorList>
            <person name="Kalnine N."/>
            <person name="Chen X."/>
            <person name="Rolfs A."/>
            <person name="Halleck A."/>
            <person name="Hines L."/>
            <person name="Eisenstein S."/>
            <person name="Koundinya M."/>
            <person name="Raphael J."/>
            <person name="Moreira D."/>
            <person name="Kelley T."/>
            <person name="LaBaer J."/>
            <person name="Lin Y."/>
            <person name="Phelan M."/>
            <person name="Farmer A."/>
        </authorList>
    </citation>
    <scope>NUCLEOTIDE SEQUENCE [LARGE SCALE MRNA]</scope>
</reference>
<reference key="5">
    <citation type="journal article" date="2004" name="Genome Res.">
        <title>The status, quality, and expansion of the NIH full-length cDNA project: the Mammalian Gene Collection (MGC).</title>
        <authorList>
            <consortium name="The MGC Project Team"/>
        </authorList>
    </citation>
    <scope>NUCLEOTIDE SEQUENCE [LARGE SCALE MRNA]</scope>
    <source>
        <tissue>Colon</tissue>
    </source>
</reference>
<reference key="6">
    <citation type="journal article" date="2004" name="Protein Sci.">
        <title>Signal peptide prediction based on analysis of experimentally verified cleavage sites.</title>
        <authorList>
            <person name="Zhang Z."/>
            <person name="Henzel W.J."/>
        </authorList>
    </citation>
    <scope>PROTEIN SEQUENCE OF 25-39</scope>
</reference>
<reference key="7">
    <citation type="journal article" date="2003" name="Genes Dev.">
        <title>Definition of a novel growth factor-dependent signal cascade for the suppression of bile acid biosynthesis.</title>
        <authorList>
            <person name="Holt J.A."/>
            <person name="Luo G."/>
            <person name="Billin A.N."/>
            <person name="Bisi J."/>
            <person name="McNeill Y.Y."/>
            <person name="Kozarsky K.F."/>
            <person name="Donahee M."/>
            <person name="Wang D.Y."/>
            <person name="Mansfield T.A."/>
            <person name="Kliewer S.A."/>
            <person name="Goodwin B."/>
            <person name="Jones S.A."/>
        </authorList>
    </citation>
    <scope>INDUCTION BY NR1H4</scope>
    <scope>FUNCTION</scope>
</reference>
<reference key="8">
    <citation type="journal article" date="2006" name="J. Biol. Chem.">
        <title>Receptor specificity of the fibroblast growth factor family. The complete mammalian FGF family.</title>
        <authorList>
            <person name="Zhang X."/>
            <person name="Ibrahimi O.A."/>
            <person name="Olsen S.K."/>
            <person name="Umemori H."/>
            <person name="Mohammadi M."/>
            <person name="Ornitz D.M."/>
        </authorList>
    </citation>
    <scope>INTERACTION WITH FGFR1; FGFR2; FGFR3 AND FGFR4</scope>
    <scope>FUNCTION IN STIMULATION OF CELL PROLIFERATION</scope>
</reference>
<reference key="9">
    <citation type="journal article" date="2007" name="J. Biol. Chem.">
        <title>Tissue-specific expression of betaKlotho and fibroblast growth factor (FGF) receptor isoforms determines metabolic activity of FGF19 and FGF21.</title>
        <authorList>
            <person name="Kurosu H."/>
            <person name="Choi M."/>
            <person name="Ogawa Y."/>
            <person name="Dickson A.S."/>
            <person name="Goetz R."/>
            <person name="Eliseenkova A.V."/>
            <person name="Mohammadi M."/>
            <person name="Rosenblatt K.P."/>
            <person name="Kliewer S.A."/>
            <person name="Kuro-o M."/>
        </authorList>
    </citation>
    <scope>FUNCTION</scope>
    <scope>INTERACTION WITH FGFR4 AND KLB</scope>
</reference>
<reference key="10">
    <citation type="journal article" date="2008" name="J. Biol. Chem.">
        <title>C-terminal tail of FGF19 determines its specificity toward Klotho co-receptors.</title>
        <authorList>
            <person name="Wu X."/>
            <person name="Lemon B."/>
            <person name="Li X."/>
            <person name="Gupte J."/>
            <person name="Weiszmann J."/>
            <person name="Stevens J."/>
            <person name="Hawkins N."/>
            <person name="Shen W."/>
            <person name="Lindberg R."/>
            <person name="Chen J.-L."/>
            <person name="Tian H."/>
            <person name="Li Y."/>
        </authorList>
    </citation>
    <scope>INTERACTION WITH FGFR4; KL AND KLB</scope>
</reference>
<reference key="11">
    <citation type="journal article" date="2009" name="Hepatology">
        <title>Bile acids activate fibroblast growth factor 19 signaling in human hepatocytes to inhibit cholesterol 7alpha-hydroxylase gene expression.</title>
        <authorList>
            <person name="Song K.H."/>
            <person name="Li T."/>
            <person name="Owsley E."/>
            <person name="Strom S."/>
            <person name="Chiang J.Y."/>
        </authorList>
    </citation>
    <scope>FUNCTION</scope>
</reference>
<reference key="12">
    <citation type="journal article" date="2010" name="Nat. Rev. Cancer">
        <title>Fibroblast growth factor signalling: from development to cancer.</title>
        <authorList>
            <person name="Turner N."/>
            <person name="Grose R."/>
        </authorList>
    </citation>
    <scope>REVIEW</scope>
</reference>
<reference key="13">
    <citation type="journal article" date="2013" name="Cell Metab.">
        <title>Diet1 functions in the FGF15/19 enterohepatic signaling axis to modulate bile acid and lipid levels.</title>
        <authorList>
            <person name="Vergnes L."/>
            <person name="Lee J.M."/>
            <person name="Chin R.G."/>
            <person name="Auwerx J."/>
            <person name="Reue K."/>
        </authorList>
    </citation>
    <scope>INTERACTION WITH MALRD1</scope>
</reference>
<reference key="14">
    <citation type="journal article" date="2004" name="Biochemistry">
        <title>The crystal structure of fibroblast growth factor (FGF) 19 reveals novel features of the FGF family and offers a structural basis for its unusual receptor affinity.</title>
        <authorList>
            <person name="Harmer N.J."/>
            <person name="Pellegrini L."/>
            <person name="Chirgadze D."/>
            <person name="Fernandez-Recio J."/>
            <person name="Blundell T.L."/>
        </authorList>
    </citation>
    <scope>X-RAY CRYSTALLOGRAPHY (1.3 ANGSTROMS) OF 39-196</scope>
    <scope>DISULFIDE BONDS</scope>
</reference>
<reference key="15">
    <citation type="journal article" date="2007" name="Mol. Cell. Biol.">
        <title>Molecular insights into the klotho-dependent, endocrine mode of action of fibroblast growth factor 19 subfamily members.</title>
        <authorList>
            <person name="Goetz R."/>
            <person name="Beenken A."/>
            <person name="Ibrahimi O.A."/>
            <person name="Kalinina J."/>
            <person name="Olsen S.K."/>
            <person name="Eliseenkova A.V."/>
            <person name="Xu C."/>
            <person name="Neubert T.A."/>
            <person name="Zhang F."/>
            <person name="Linhardt R.J."/>
            <person name="Yu X."/>
            <person name="White K.E."/>
            <person name="Inagaki T."/>
            <person name="Kliewer S.A."/>
            <person name="Yamamoto M."/>
            <person name="Kurosu H."/>
            <person name="Ogawa Y."/>
            <person name="Kuro-o M."/>
            <person name="Lanske B."/>
            <person name="Razzaque M.S."/>
            <person name="Mohammadi M."/>
        </authorList>
    </citation>
    <scope>X-RAY CRYSTALLOGRAPHY (1.8 ANGSTROMS) OF 23-216</scope>
    <scope>INTERACTION WITH KLB</scope>
</reference>
<feature type="signal peptide" evidence="4">
    <location>
        <begin position="1"/>
        <end position="24"/>
    </location>
</feature>
<feature type="chain" id="PRO_0000008993" description="Fibroblast growth factor 19">
    <location>
        <begin position="25"/>
        <end position="216"/>
    </location>
</feature>
<feature type="disulfide bond" evidence="3">
    <location>
        <begin position="58"/>
        <end position="70"/>
    </location>
</feature>
<feature type="disulfide bond" evidence="3">
    <location>
        <begin position="102"/>
        <end position="120"/>
    </location>
</feature>
<feature type="strand" evidence="12">
    <location>
        <begin position="42"/>
        <end position="49"/>
    </location>
</feature>
<feature type="strand" evidence="12">
    <location>
        <begin position="58"/>
        <end position="62"/>
    </location>
</feature>
<feature type="strand" evidence="12">
    <location>
        <begin position="66"/>
        <end position="73"/>
    </location>
</feature>
<feature type="helix" evidence="12">
    <location>
        <begin position="76"/>
        <end position="78"/>
    </location>
</feature>
<feature type="strand" evidence="12">
    <location>
        <begin position="80"/>
        <end position="86"/>
    </location>
</feature>
<feature type="strand" evidence="12">
    <location>
        <begin position="89"/>
        <end position="94"/>
    </location>
</feature>
<feature type="turn" evidence="12">
    <location>
        <begin position="95"/>
        <end position="97"/>
    </location>
</feature>
<feature type="strand" evidence="12">
    <location>
        <begin position="100"/>
        <end position="103"/>
    </location>
</feature>
<feature type="helix" evidence="12">
    <location>
        <begin position="105"/>
        <end position="107"/>
    </location>
</feature>
<feature type="strand" evidence="12">
    <location>
        <begin position="109"/>
        <end position="114"/>
    </location>
</feature>
<feature type="helix" evidence="12">
    <location>
        <begin position="117"/>
        <end position="120"/>
    </location>
</feature>
<feature type="strand" evidence="12">
    <location>
        <begin position="121"/>
        <end position="126"/>
    </location>
</feature>
<feature type="strand" evidence="12">
    <location>
        <begin position="132"/>
        <end position="136"/>
    </location>
</feature>
<feature type="turn" evidence="12">
    <location>
        <begin position="137"/>
        <end position="140"/>
    </location>
</feature>
<feature type="helix" evidence="13">
    <location>
        <begin position="150"/>
        <end position="152"/>
    </location>
</feature>
<feature type="helix" evidence="13">
    <location>
        <begin position="153"/>
        <end position="156"/>
    </location>
</feature>
<feature type="strand" evidence="12">
    <location>
        <begin position="165"/>
        <end position="168"/>
    </location>
</feature>
<keyword id="KW-0002">3D-structure</keyword>
<keyword id="KW-0903">Direct protein sequencing</keyword>
<keyword id="KW-1015">Disulfide bond</keyword>
<keyword id="KW-0339">Growth factor</keyword>
<keyword id="KW-1267">Proteomics identification</keyword>
<keyword id="KW-1185">Reference proteome</keyword>
<keyword id="KW-0964">Secreted</keyword>
<keyword id="KW-0732">Signal</keyword>
<accession>O95750</accession>
<comment type="function">
    <text evidence="2 5 7 9">Involved in the suppression of bile acid biosynthesis through down-regulation of CYP7A1 expression, following positive regulation of the JNK and ERK1/2 cascades. Stimulates glucose uptake in adipocytes. Activity requires the presence of KLB and FGFR4.</text>
</comment>
<comment type="subunit">
    <text evidence="1 5 6 7 8 10">Interacts with FGFR1, FGFR2, FGFR3 and FGFR4. Affinity between fibroblast growth factors (FGFs) and their receptors is increased by KL, KLB and heparan sulfate glycosaminoglycans that function as coreceptors. Interacts with KL; this interaction is direct. Interacts with KLB; this interaction is direct. Interacts with FGFR4 in the presence of heparin, KL or KLB. Interacts with MALRD1 (PubMed:23747249).</text>
</comment>
<comment type="subcellular location">
    <subcellularLocation>
        <location>Secreted</location>
    </subcellularLocation>
</comment>
<comment type="tissue specificity">
    <text evidence="1">Expressed in fetal brain, cartilage, retina, and adult gall bladder.</text>
</comment>
<comment type="induction">
    <text evidence="2">Induced by the bile acids receptor NR1H4 that binds and activates a NR1H4-responsive element within intron 2.</text>
</comment>
<comment type="miscellaneous">
    <text>Contrarily to other members of the family that can bind several FGF receptors FGF19 is specific for FGFR4.</text>
</comment>
<comment type="similarity">
    <text evidence="11">Belongs to the heparin-binding growth factors family.</text>
</comment>
<organism>
    <name type="scientific">Homo sapiens</name>
    <name type="common">Human</name>
    <dbReference type="NCBI Taxonomy" id="9606"/>
    <lineage>
        <taxon>Eukaryota</taxon>
        <taxon>Metazoa</taxon>
        <taxon>Chordata</taxon>
        <taxon>Craniata</taxon>
        <taxon>Vertebrata</taxon>
        <taxon>Euteleostomi</taxon>
        <taxon>Mammalia</taxon>
        <taxon>Eutheria</taxon>
        <taxon>Euarchontoglires</taxon>
        <taxon>Primates</taxon>
        <taxon>Haplorrhini</taxon>
        <taxon>Catarrhini</taxon>
        <taxon>Hominidae</taxon>
        <taxon>Homo</taxon>
    </lineage>
</organism>
<gene>
    <name type="primary">FGF19</name>
    <name type="ORF">UNQ334/PRO533</name>
</gene>
<sequence>MRSGCVVVHVWILAGLWLAVAGRPLAFSDAGPHVHYGWGDPIRLRHLYTSGPHGLSSCFLRIRADGVVDCARGQSAHSLLEIKAVALRTVAIKGVHSVRYLCMGADGKMQGLLQYSEEDCAFEEEIRPDGYNVYRSEKHRLPVSLSSAKQRQLYKNRGFLPLSHFLPMLPMVPEEPEDLRGHLESDMFSSPLETDSMDPFGLVTGLEAVRSPSFEK</sequence>
<evidence type="ECO:0000269" key="1">
    <source>
    </source>
</evidence>
<evidence type="ECO:0000269" key="2">
    <source>
    </source>
</evidence>
<evidence type="ECO:0000269" key="3">
    <source>
    </source>
</evidence>
<evidence type="ECO:0000269" key="4">
    <source>
    </source>
</evidence>
<evidence type="ECO:0000269" key="5">
    <source>
    </source>
</evidence>
<evidence type="ECO:0000269" key="6">
    <source>
    </source>
</evidence>
<evidence type="ECO:0000269" key="7">
    <source>
    </source>
</evidence>
<evidence type="ECO:0000269" key="8">
    <source>
    </source>
</evidence>
<evidence type="ECO:0000269" key="9">
    <source>
    </source>
</evidence>
<evidence type="ECO:0000269" key="10">
    <source>
    </source>
</evidence>
<evidence type="ECO:0000305" key="11"/>
<evidence type="ECO:0007829" key="12">
    <source>
        <dbReference type="PDB" id="1PWA"/>
    </source>
</evidence>
<evidence type="ECO:0007829" key="13">
    <source>
        <dbReference type="PDB" id="2P23"/>
    </source>
</evidence>
<dbReference type="EMBL" id="AB018122">
    <property type="protein sequence ID" value="BAA75500.1"/>
    <property type="molecule type" value="mRNA"/>
</dbReference>
<dbReference type="EMBL" id="AF110400">
    <property type="protein sequence ID" value="AAD45973.1"/>
    <property type="molecule type" value="mRNA"/>
</dbReference>
<dbReference type="EMBL" id="AY358302">
    <property type="protein sequence ID" value="AAQ88669.1"/>
    <property type="molecule type" value="mRNA"/>
</dbReference>
<dbReference type="EMBL" id="BT006729">
    <property type="protein sequence ID" value="AAP35375.1"/>
    <property type="molecule type" value="mRNA"/>
</dbReference>
<dbReference type="EMBL" id="BC017664">
    <property type="protein sequence ID" value="AAH17664.1"/>
    <property type="molecule type" value="mRNA"/>
</dbReference>
<dbReference type="CCDS" id="CCDS8193.1"/>
<dbReference type="RefSeq" id="NP_005108.1">
    <property type="nucleotide sequence ID" value="NM_005117.3"/>
</dbReference>
<dbReference type="PDB" id="1PWA">
    <property type="method" value="X-ray"/>
    <property type="resolution" value="1.30 A"/>
    <property type="chains" value="A=39-196"/>
</dbReference>
<dbReference type="PDB" id="2P23">
    <property type="method" value="X-ray"/>
    <property type="resolution" value="1.80 A"/>
    <property type="chains" value="A/B=23-216"/>
</dbReference>
<dbReference type="PDB" id="6KTR">
    <property type="method" value="X-ray"/>
    <property type="resolution" value="2.60 A"/>
    <property type="chains" value="C/D=23-216"/>
</dbReference>
<dbReference type="PDB" id="6NFJ">
    <property type="method" value="X-ray"/>
    <property type="resolution" value="3.19 A"/>
    <property type="chains" value="C/F=167-216"/>
</dbReference>
<dbReference type="PDBsum" id="1PWA"/>
<dbReference type="PDBsum" id="2P23"/>
<dbReference type="PDBsum" id="6KTR"/>
<dbReference type="PDBsum" id="6NFJ"/>
<dbReference type="SMR" id="O95750"/>
<dbReference type="BioGRID" id="115290">
    <property type="interactions" value="7"/>
</dbReference>
<dbReference type="CORUM" id="O95750"/>
<dbReference type="DIP" id="DIP-6039N"/>
<dbReference type="FunCoup" id="O95750">
    <property type="interactions" value="1027"/>
</dbReference>
<dbReference type="IntAct" id="O95750">
    <property type="interactions" value="4"/>
</dbReference>
<dbReference type="STRING" id="9606.ENSP00000294312"/>
<dbReference type="DrugBank" id="DB01109">
    <property type="generic name" value="Heparin"/>
</dbReference>
<dbReference type="iPTMnet" id="O95750"/>
<dbReference type="PhosphoSitePlus" id="O95750"/>
<dbReference type="BioMuta" id="FGF19"/>
<dbReference type="MassIVE" id="O95750"/>
<dbReference type="PaxDb" id="9606-ENSP00000294312"/>
<dbReference type="PeptideAtlas" id="O95750"/>
<dbReference type="ProteomicsDB" id="51021"/>
<dbReference type="Antibodypedia" id="30654">
    <property type="antibodies" value="447 antibodies from 35 providers"/>
</dbReference>
<dbReference type="DNASU" id="9965"/>
<dbReference type="Ensembl" id="ENST00000294312.4">
    <property type="protein sequence ID" value="ENSP00000294312.3"/>
    <property type="gene ID" value="ENSG00000162344.4"/>
</dbReference>
<dbReference type="GeneID" id="9965"/>
<dbReference type="KEGG" id="hsa:9965"/>
<dbReference type="MANE-Select" id="ENST00000294312.4">
    <property type="protein sequence ID" value="ENSP00000294312.3"/>
    <property type="RefSeq nucleotide sequence ID" value="NM_005117.3"/>
    <property type="RefSeq protein sequence ID" value="NP_005108.1"/>
</dbReference>
<dbReference type="UCSC" id="uc001opf.4">
    <property type="organism name" value="human"/>
</dbReference>
<dbReference type="AGR" id="HGNC:3675"/>
<dbReference type="CTD" id="9965"/>
<dbReference type="DisGeNET" id="9965"/>
<dbReference type="GeneCards" id="FGF19"/>
<dbReference type="HGNC" id="HGNC:3675">
    <property type="gene designation" value="FGF19"/>
</dbReference>
<dbReference type="HPA" id="ENSG00000162344">
    <property type="expression patterns" value="Tissue enriched (gallbladder)"/>
</dbReference>
<dbReference type="MalaCards" id="FGF19"/>
<dbReference type="MIM" id="603891">
    <property type="type" value="gene"/>
</dbReference>
<dbReference type="neXtProt" id="NX_O95750"/>
<dbReference type="OpenTargets" id="ENSG00000162344"/>
<dbReference type="PharmGKB" id="PA28114"/>
<dbReference type="VEuPathDB" id="HostDB:ENSG00000162344"/>
<dbReference type="eggNOG" id="KOG3885">
    <property type="taxonomic scope" value="Eukaryota"/>
</dbReference>
<dbReference type="GeneTree" id="ENSGT00940000160601"/>
<dbReference type="HOGENOM" id="CLU_094251_1_0_1"/>
<dbReference type="InParanoid" id="O95750"/>
<dbReference type="OMA" id="GPHVYYG"/>
<dbReference type="OrthoDB" id="9937370at2759"/>
<dbReference type="PAN-GO" id="O95750">
    <property type="GO annotations" value="11 GO annotations based on evolutionary models"/>
</dbReference>
<dbReference type="PhylomeDB" id="O95750"/>
<dbReference type="TreeFam" id="TF335872"/>
<dbReference type="PathwayCommons" id="O95750"/>
<dbReference type="Reactome" id="R-HSA-109704">
    <property type="pathway name" value="PI3K Cascade"/>
</dbReference>
<dbReference type="Reactome" id="R-HSA-1257604">
    <property type="pathway name" value="PIP3 activates AKT signaling"/>
</dbReference>
<dbReference type="Reactome" id="R-HSA-1307965">
    <property type="pathway name" value="betaKlotho-mediated ligand binding"/>
</dbReference>
<dbReference type="Reactome" id="R-HSA-190322">
    <property type="pathway name" value="FGFR4 ligand binding and activation"/>
</dbReference>
<dbReference type="Reactome" id="R-HSA-2219530">
    <property type="pathway name" value="Constitutive Signaling by Aberrant PI3K in Cancer"/>
</dbReference>
<dbReference type="Reactome" id="R-HSA-5654228">
    <property type="pathway name" value="Phospholipase C-mediated cascade, FGFR4"/>
</dbReference>
<dbReference type="Reactome" id="R-HSA-5654712">
    <property type="pathway name" value="FRS-mediated FGFR4 signaling"/>
</dbReference>
<dbReference type="Reactome" id="R-HSA-5654719">
    <property type="pathway name" value="SHC-mediated cascade:FGFR4"/>
</dbReference>
<dbReference type="Reactome" id="R-HSA-5654720">
    <property type="pathway name" value="PI-3K cascade:FGFR4"/>
</dbReference>
<dbReference type="Reactome" id="R-HSA-5654733">
    <property type="pathway name" value="Negative regulation of FGFR4 signaling"/>
</dbReference>
<dbReference type="Reactome" id="R-HSA-5673001">
    <property type="pathway name" value="RAF/MAP kinase cascade"/>
</dbReference>
<dbReference type="Reactome" id="R-HSA-6811558">
    <property type="pathway name" value="PI5P, PP2A and IER3 Regulate PI3K/AKT Signaling"/>
</dbReference>
<dbReference type="SignaLink" id="O95750"/>
<dbReference type="SIGNOR" id="O95750"/>
<dbReference type="BioGRID-ORCS" id="9965">
    <property type="hits" value="14 hits in 1064 CRISPR screens"/>
</dbReference>
<dbReference type="ChiTaRS" id="FGF19">
    <property type="organism name" value="human"/>
</dbReference>
<dbReference type="EvolutionaryTrace" id="O95750"/>
<dbReference type="GeneWiki" id="FGF19"/>
<dbReference type="GenomeRNAi" id="9965"/>
<dbReference type="Pharos" id="O95750">
    <property type="development level" value="Tbio"/>
</dbReference>
<dbReference type="PRO" id="PR:O95750"/>
<dbReference type="Proteomes" id="UP000005640">
    <property type="component" value="Chromosome 11"/>
</dbReference>
<dbReference type="RNAct" id="O95750">
    <property type="molecule type" value="protein"/>
</dbReference>
<dbReference type="Bgee" id="ENSG00000162344">
    <property type="expression patterns" value="Expressed in gall bladder and 20 other cell types or tissues"/>
</dbReference>
<dbReference type="GO" id="GO:0005737">
    <property type="term" value="C:cytoplasm"/>
    <property type="evidence" value="ECO:0000318"/>
    <property type="project" value="GO_Central"/>
</dbReference>
<dbReference type="GO" id="GO:0005576">
    <property type="term" value="C:extracellular region"/>
    <property type="evidence" value="ECO:0000304"/>
    <property type="project" value="Reactome"/>
</dbReference>
<dbReference type="GO" id="GO:0005615">
    <property type="term" value="C:extracellular space"/>
    <property type="evidence" value="ECO:0000318"/>
    <property type="project" value="GO_Central"/>
</dbReference>
<dbReference type="GO" id="GO:0005104">
    <property type="term" value="F:fibroblast growth factor receptor binding"/>
    <property type="evidence" value="ECO:0000353"/>
    <property type="project" value="UniProtKB"/>
</dbReference>
<dbReference type="GO" id="GO:0008083">
    <property type="term" value="F:growth factor activity"/>
    <property type="evidence" value="ECO:0000318"/>
    <property type="project" value="GO_Central"/>
</dbReference>
<dbReference type="GO" id="GO:0015721">
    <property type="term" value="P:bile acid and bile salt transport"/>
    <property type="evidence" value="ECO:0007669"/>
    <property type="project" value="Ensembl"/>
</dbReference>
<dbReference type="GO" id="GO:0008543">
    <property type="term" value="P:fibroblast growth factor receptor signaling pathway"/>
    <property type="evidence" value="ECO:0000316"/>
    <property type="project" value="MGI"/>
</dbReference>
<dbReference type="GO" id="GO:0007507">
    <property type="term" value="P:heart development"/>
    <property type="evidence" value="ECO:0007669"/>
    <property type="project" value="Ensembl"/>
</dbReference>
<dbReference type="GO" id="GO:0070858">
    <property type="term" value="P:negative regulation of bile acid biosynthetic process"/>
    <property type="evidence" value="ECO:0000314"/>
    <property type="project" value="UniProtKB"/>
</dbReference>
<dbReference type="GO" id="GO:0010629">
    <property type="term" value="P:negative regulation of gene expression"/>
    <property type="evidence" value="ECO:0000314"/>
    <property type="project" value="UniProtKB"/>
</dbReference>
<dbReference type="GO" id="GO:0007399">
    <property type="term" value="P:nervous system development"/>
    <property type="evidence" value="ECO:0000304"/>
    <property type="project" value="ProtInc"/>
</dbReference>
<dbReference type="GO" id="GO:0001755">
    <property type="term" value="P:neural crest cell migration"/>
    <property type="evidence" value="ECO:0007669"/>
    <property type="project" value="Ensembl"/>
</dbReference>
<dbReference type="GO" id="GO:0022008">
    <property type="term" value="P:neurogenesis"/>
    <property type="evidence" value="ECO:0000318"/>
    <property type="project" value="GO_Central"/>
</dbReference>
<dbReference type="GO" id="GO:0008284">
    <property type="term" value="P:positive regulation of cell population proliferation"/>
    <property type="evidence" value="ECO:0000316"/>
    <property type="project" value="MGI"/>
</dbReference>
<dbReference type="GO" id="GO:0046326">
    <property type="term" value="P:positive regulation of D-glucose import"/>
    <property type="evidence" value="ECO:0000314"/>
    <property type="project" value="UniProtKB"/>
</dbReference>
<dbReference type="GO" id="GO:0070374">
    <property type="term" value="P:positive regulation of ERK1 and ERK2 cascade"/>
    <property type="evidence" value="ECO:0000314"/>
    <property type="project" value="UniProtKB"/>
</dbReference>
<dbReference type="GO" id="GO:0046330">
    <property type="term" value="P:positive regulation of JNK cascade"/>
    <property type="evidence" value="ECO:0000314"/>
    <property type="project" value="UniProtKB"/>
</dbReference>
<dbReference type="GO" id="GO:0043410">
    <property type="term" value="P:positive regulation of MAPK cascade"/>
    <property type="evidence" value="ECO:0000318"/>
    <property type="project" value="GO_Central"/>
</dbReference>
<dbReference type="GO" id="GO:0001934">
    <property type="term" value="P:positive regulation of protein phosphorylation"/>
    <property type="evidence" value="ECO:0000314"/>
    <property type="project" value="UniProtKB"/>
</dbReference>
<dbReference type="GO" id="GO:0030334">
    <property type="term" value="P:regulation of cell migration"/>
    <property type="evidence" value="ECO:0000318"/>
    <property type="project" value="GO_Central"/>
</dbReference>
<dbReference type="GO" id="GO:0009617">
    <property type="term" value="P:response to bacterium"/>
    <property type="evidence" value="ECO:0007669"/>
    <property type="project" value="Ensembl"/>
</dbReference>
<dbReference type="GO" id="GO:0045471">
    <property type="term" value="P:response to ethanol"/>
    <property type="evidence" value="ECO:0007669"/>
    <property type="project" value="Ensembl"/>
</dbReference>
<dbReference type="CDD" id="cd23331">
    <property type="entry name" value="beta-trefoil_FGF19"/>
    <property type="match status" value="1"/>
</dbReference>
<dbReference type="FunFam" id="2.80.10.50:FF:000053">
    <property type="entry name" value="Fibroblast growth factor"/>
    <property type="match status" value="1"/>
</dbReference>
<dbReference type="Gene3D" id="2.80.10.50">
    <property type="match status" value="1"/>
</dbReference>
<dbReference type="InterPro" id="IPR035444">
    <property type="entry name" value="FGF15/19/21"/>
</dbReference>
<dbReference type="InterPro" id="IPR002209">
    <property type="entry name" value="Fibroblast_GF_fam"/>
</dbReference>
<dbReference type="InterPro" id="IPR008996">
    <property type="entry name" value="IL1/FGF"/>
</dbReference>
<dbReference type="PANTHER" id="PTHR11486">
    <property type="entry name" value="FIBROBLAST GROWTH FACTOR"/>
    <property type="match status" value="1"/>
</dbReference>
<dbReference type="Pfam" id="PF00167">
    <property type="entry name" value="FGF"/>
    <property type="match status" value="1"/>
</dbReference>
<dbReference type="PIRSF" id="PIRSF037961">
    <property type="entry name" value="FGF-19_FGF-21"/>
    <property type="match status" value="1"/>
</dbReference>
<dbReference type="PRINTS" id="PR00263">
    <property type="entry name" value="HBGFFGF"/>
</dbReference>
<dbReference type="PRINTS" id="PR00262">
    <property type="entry name" value="IL1HBGF"/>
</dbReference>
<dbReference type="SMART" id="SM00442">
    <property type="entry name" value="FGF"/>
    <property type="match status" value="1"/>
</dbReference>
<dbReference type="SUPFAM" id="SSF50353">
    <property type="entry name" value="Cytokine"/>
    <property type="match status" value="1"/>
</dbReference>
<dbReference type="PROSITE" id="PS00247">
    <property type="entry name" value="HBGF_FGF"/>
    <property type="match status" value="1"/>
</dbReference>
<name>FGF19_HUMAN</name>
<protein>
    <recommendedName>
        <fullName>Fibroblast growth factor 19</fullName>
        <shortName>FGF-19</shortName>
    </recommendedName>
</protein>